<accession>Q7Z027</accession>
<sequence>MKLTCVMIVAVLFLTAWTVVTAEPHSSNVLENLYLKAHHEMENPEASKLNTRDRCQRANFVCDAFHHAAVCCEGVCVLVCAW</sequence>
<protein>
    <recommendedName>
        <fullName>Conotoxin C11GB</fullName>
    </recommendedName>
</protein>
<name>O16CB_CONVX</name>
<comment type="subcellular location">
    <subcellularLocation>
        <location evidence="1">Secreted</location>
    </subcellularLocation>
</comment>
<comment type="tissue specificity">
    <text>Expressed by the venom duct.</text>
</comment>
<comment type="domain">
    <text evidence="1">The presence of a 'disulfide through disulfide knot' structurally defines this protein as a knottin.</text>
</comment>
<comment type="domain">
    <text>The cysteine framework is VI/VII (C-C-CC-C-C).</text>
</comment>
<comment type="similarity">
    <text evidence="3">Belongs to the conotoxin O1 superfamily.</text>
</comment>
<reference key="1">
    <citation type="submission" date="2003-06" db="EMBL/GenBank/DDBJ databases">
        <title>C11GB conotoxin scaffold VI/VII precursor.</title>
        <authorList>
            <person name="Luo S."/>
            <person name="Zhang B."/>
            <person name="Zhangsun D."/>
        </authorList>
    </citation>
    <scope>NUCLEOTIDE SEQUENCE [GENOMIC DNA]</scope>
</reference>
<proteinExistence type="inferred from homology"/>
<dbReference type="EMBL" id="AY316160">
    <property type="protein sequence ID" value="AAP74716.1"/>
    <property type="molecule type" value="Genomic_DNA"/>
</dbReference>
<dbReference type="ConoServer" id="827">
    <property type="toxin name" value="A11GB precursor"/>
</dbReference>
<dbReference type="GO" id="GO:0005576">
    <property type="term" value="C:extracellular region"/>
    <property type="evidence" value="ECO:0007669"/>
    <property type="project" value="UniProtKB-SubCell"/>
</dbReference>
<dbReference type="GO" id="GO:0008200">
    <property type="term" value="F:ion channel inhibitor activity"/>
    <property type="evidence" value="ECO:0007669"/>
    <property type="project" value="InterPro"/>
</dbReference>
<dbReference type="GO" id="GO:0090729">
    <property type="term" value="F:toxin activity"/>
    <property type="evidence" value="ECO:0007669"/>
    <property type="project" value="UniProtKB-KW"/>
</dbReference>
<dbReference type="InterPro" id="IPR004214">
    <property type="entry name" value="Conotoxin"/>
</dbReference>
<dbReference type="Pfam" id="PF02950">
    <property type="entry name" value="Conotoxin"/>
    <property type="match status" value="1"/>
</dbReference>
<evidence type="ECO:0000250" key="1"/>
<evidence type="ECO:0000255" key="2"/>
<evidence type="ECO:0000305" key="3"/>
<keyword id="KW-1015">Disulfide bond</keyword>
<keyword id="KW-0960">Knottin</keyword>
<keyword id="KW-0528">Neurotoxin</keyword>
<keyword id="KW-0964">Secreted</keyword>
<keyword id="KW-0732">Signal</keyword>
<keyword id="KW-0800">Toxin</keyword>
<organism>
    <name type="scientific">Conus vexillum</name>
    <name type="common">Flag cone</name>
    <dbReference type="NCBI Taxonomy" id="89431"/>
    <lineage>
        <taxon>Eukaryota</taxon>
        <taxon>Metazoa</taxon>
        <taxon>Spiralia</taxon>
        <taxon>Lophotrochozoa</taxon>
        <taxon>Mollusca</taxon>
        <taxon>Gastropoda</taxon>
        <taxon>Caenogastropoda</taxon>
        <taxon>Neogastropoda</taxon>
        <taxon>Conoidea</taxon>
        <taxon>Conidae</taxon>
        <taxon>Conus</taxon>
        <taxon>Rhizoconus</taxon>
    </lineage>
</organism>
<feature type="signal peptide" evidence="2">
    <location>
        <begin position="1"/>
        <end position="22"/>
    </location>
</feature>
<feature type="propeptide" id="PRO_0000414935" evidence="1">
    <location>
        <begin position="23"/>
        <end position="53"/>
    </location>
</feature>
<feature type="peptide" id="PRO_0000414936" description="Conotoxin C11GB">
    <location>
        <begin position="55"/>
        <end position="82"/>
    </location>
</feature>
<feature type="disulfide bond" evidence="1">
    <location>
        <begin position="55"/>
        <end position="72"/>
    </location>
</feature>
<feature type="disulfide bond" evidence="1">
    <location>
        <begin position="62"/>
        <end position="76"/>
    </location>
</feature>
<feature type="disulfide bond" evidence="1">
    <location>
        <begin position="71"/>
        <end position="80"/>
    </location>
</feature>